<evidence type="ECO:0000250" key="1">
    <source>
        <dbReference type="UniProtKB" id="P00171"/>
    </source>
</evidence>
<evidence type="ECO:0000250" key="2">
    <source>
        <dbReference type="UniProtKB" id="P56395"/>
    </source>
</evidence>
<evidence type="ECO:0000255" key="3"/>
<evidence type="ECO:0000255" key="4">
    <source>
        <dbReference type="PROSITE-ProRule" id="PRU00279"/>
    </source>
</evidence>
<evidence type="ECO:0000269" key="5">
    <source>
    </source>
</evidence>
<evidence type="ECO:0000269" key="6">
    <source>
    </source>
</evidence>
<evidence type="ECO:0000269" key="7">
    <source>
    </source>
</evidence>
<evidence type="ECO:0000303" key="8">
    <source>
    </source>
</evidence>
<evidence type="ECO:0000305" key="9"/>
<evidence type="ECO:0007829" key="10">
    <source>
        <dbReference type="PDB" id="3X34"/>
    </source>
</evidence>
<reference key="1">
    <citation type="journal article" date="1997" name="Biochem. Biophys. Res. Commun.">
        <title>The isolation and characterization of the soluble and membrane-bound porcine cytochrome b5 cDNAs.</title>
        <authorList>
            <person name="Vandermark P.K."/>
            <person name="Steggles A.W."/>
        </authorList>
    </citation>
    <scope>NUCLEOTIDE SEQUENCE [MRNA] (ISOFORMS 1 AND 2)</scope>
    <source>
        <tissue>Blood</tissue>
        <tissue>Liver</tissue>
    </source>
</reference>
<reference key="2">
    <citation type="journal article" date="1985" name="J. Biochem.">
        <title>Amino acid sequences of cytochrome b5 from human, porcine, and bovine erythrocytes and comparison with liver microsomal cytochrome b5.</title>
        <authorList>
            <person name="Abe K."/>
            <person name="Kimura S."/>
            <person name="Kizawa R."/>
            <person name="Anan F.K."/>
            <person name="Sugita Y."/>
        </authorList>
    </citation>
    <scope>PROTEIN SEQUENCE OF 2-134</scope>
    <source>
        <tissue>Erythrocyte</tissue>
        <tissue>Liver</tissue>
    </source>
</reference>
<reference key="3">
    <citation type="journal article" date="1974" name="Biochemistry">
        <title>Cytochrome b5 from microsomal membranes of equine, bovine, and porcine livers. Isolation and properties of preparations containing the membranous segment.</title>
        <authorList>
            <person name="Ozols J."/>
        </authorList>
    </citation>
    <scope>PROTEIN SEQUENCE OF 2-7</scope>
</reference>
<reference key="4">
    <citation type="journal article" date="1971" name="J. Biol. Chem.">
        <title>Amino acid sequences of tryptic peptides of cytochromes b5 from microsomes of human, monkey, porcine, and chicken liver.</title>
        <authorList>
            <person name="Nobrega F.G."/>
            <person name="Ozols J."/>
        </authorList>
    </citation>
    <scope>PROTEIN SEQUENCE OF 8-89</scope>
</reference>
<reference key="5">
    <citation type="journal article" date="1977" name="Proc. Natl. Acad. Sci. U.S.A.">
        <title>Primary structure of the membranous segment of cytochrome b5.</title>
        <authorList>
            <person name="Ozols J."/>
            <person name="Gerard C."/>
        </authorList>
    </citation>
    <scope>PROTEIN SEQUENCE OF 90-134</scope>
    <scope>SEQUENCE REVISION TO 14; 15 AND 61</scope>
</reference>
<reference key="6">
    <citation type="journal article" date="1989" name="Biochim. Biophys. Acta">
        <title>Structure of cytochrome b5 and its topology in the microsomal membrane.</title>
        <authorList>
            <person name="Ozols J."/>
        </authorList>
    </citation>
    <scope>PROTEIN SEQUENCE OF 2-11</scope>
</reference>
<sequence>MAEQSDKAVKYYTLEEIQKHNNSKSTWLILHHKVYDLTKFLEEHPGGEEVLREQAGGDATENFEDVGHSTDARELSKTFIIGELHPDDRSKIAKPSETLITTVESNSSWWTNWVIPAISALVVSLMYHFYTSEN</sequence>
<protein>
    <recommendedName>
        <fullName>Cytochrome b5</fullName>
    </recommendedName>
</protein>
<proteinExistence type="evidence at protein level"/>
<gene>
    <name type="primary">CYB5A</name>
    <name type="synonym">CYB5</name>
</gene>
<keyword id="KW-0002">3D-structure</keyword>
<keyword id="KW-0007">Acetylation</keyword>
<keyword id="KW-0025">Alternative splicing</keyword>
<keyword id="KW-0963">Cytoplasm</keyword>
<keyword id="KW-0903">Direct protein sequencing</keyword>
<keyword id="KW-0249">Electron transport</keyword>
<keyword id="KW-0256">Endoplasmic reticulum</keyword>
<keyword id="KW-0349">Heme</keyword>
<keyword id="KW-0408">Iron</keyword>
<keyword id="KW-0472">Membrane</keyword>
<keyword id="KW-0479">Metal-binding</keyword>
<keyword id="KW-0492">Microsome</keyword>
<keyword id="KW-1185">Reference proteome</keyword>
<keyword id="KW-0812">Transmembrane</keyword>
<keyword id="KW-1133">Transmembrane helix</keyword>
<keyword id="KW-0813">Transport</keyword>
<comment type="function">
    <text>Cytochrome b5 is a membrane-bound hemoprotein functioning as an electron carrier for several membrane-bound oxygenases.</text>
</comment>
<comment type="subcellular location">
    <molecule>Isoform 1</molecule>
    <subcellularLocation>
        <location>Endoplasmic reticulum membrane</location>
        <topology>Single-pass membrane protein</topology>
        <orientation>Cytoplasmic side</orientation>
    </subcellularLocation>
    <subcellularLocation>
        <location>Microsome membrane</location>
        <topology>Single-pass membrane protein</topology>
        <orientation>Cytoplasmic side</orientation>
    </subcellularLocation>
</comment>
<comment type="subcellular location">
    <molecule>Isoform 2</molecule>
    <subcellularLocation>
        <location>Cytoplasm</location>
    </subcellularLocation>
</comment>
<comment type="alternative products">
    <event type="alternative splicing"/>
    <isoform>
        <id>P00172-1</id>
        <name>1</name>
        <name>Liver</name>
        <name>Membrane-bound</name>
        <sequence type="displayed"/>
    </isoform>
    <isoform>
        <id>P00172-2</id>
        <name>2</name>
        <name>Erythrocyte</name>
        <name>Cytoplasmic</name>
        <sequence type="described" ref="VSP_001242 VSP_001243"/>
    </isoform>
</comment>
<comment type="similarity">
    <text evidence="9">Belongs to the cytochrome b5 family.</text>
</comment>
<accession>P00172</accession>
<accession>O18813</accession>
<organism>
    <name type="scientific">Sus scrofa</name>
    <name type="common">Pig</name>
    <dbReference type="NCBI Taxonomy" id="9823"/>
    <lineage>
        <taxon>Eukaryota</taxon>
        <taxon>Metazoa</taxon>
        <taxon>Chordata</taxon>
        <taxon>Craniata</taxon>
        <taxon>Vertebrata</taxon>
        <taxon>Euteleostomi</taxon>
        <taxon>Mammalia</taxon>
        <taxon>Eutheria</taxon>
        <taxon>Laurasiatheria</taxon>
        <taxon>Artiodactyla</taxon>
        <taxon>Suina</taxon>
        <taxon>Suidae</taxon>
        <taxon>Sus</taxon>
    </lineage>
</organism>
<feature type="initiator methionine" description="Removed" evidence="1 5 6 7">
    <location>
        <position position="1"/>
    </location>
</feature>
<feature type="chain" id="PRO_0000166012" description="Cytochrome b5">
    <location>
        <begin position="2"/>
        <end position="134"/>
    </location>
</feature>
<feature type="transmembrane region" description="Helical" evidence="3">
    <location>
        <begin position="109"/>
        <end position="131"/>
    </location>
</feature>
<feature type="domain" description="Cytochrome b5 heme-binding" evidence="4">
    <location>
        <begin position="9"/>
        <end position="85"/>
    </location>
</feature>
<feature type="binding site" description="axial binding residue">
    <location>
        <position position="44"/>
    </location>
    <ligand>
        <name>heme</name>
        <dbReference type="ChEBI" id="CHEBI:30413"/>
    </ligand>
    <ligandPart>
        <name>Fe</name>
        <dbReference type="ChEBI" id="CHEBI:18248"/>
    </ligandPart>
</feature>
<feature type="binding site" description="axial binding residue">
    <location>
        <position position="68"/>
    </location>
    <ligand>
        <name>heme</name>
        <dbReference type="ChEBI" id="CHEBI:30413"/>
    </ligand>
    <ligandPart>
        <name>Fe</name>
        <dbReference type="ChEBI" id="CHEBI:18248"/>
    </ligandPart>
</feature>
<feature type="modified residue" description="N-acetylalanine" evidence="1">
    <location>
        <position position="2"/>
    </location>
</feature>
<feature type="modified residue" description="N6-acetyllysine" evidence="2">
    <location>
        <position position="7"/>
    </location>
</feature>
<feature type="modified residue" description="N6-acetyllysine" evidence="2">
    <location>
        <position position="10"/>
    </location>
</feature>
<feature type="modified residue" description="N6-acetyllysine" evidence="2">
    <location>
        <position position="19"/>
    </location>
</feature>
<feature type="splice variant" id="VSP_001242" description="In isoform 2." evidence="8">
    <original>T</original>
    <variation>S</variation>
    <location>
        <position position="98"/>
    </location>
</feature>
<feature type="splice variant" id="VSP_001243" description="In isoform 2." evidence="8">
    <location>
        <begin position="99"/>
        <end position="134"/>
    </location>
</feature>
<feature type="sequence conflict" description="In Ref. 4; AA sequence." evidence="9" ref="4">
    <original>N</original>
    <variation>D</variation>
    <location>
        <position position="62"/>
    </location>
</feature>
<feature type="helix" evidence="10">
    <location>
        <begin position="14"/>
        <end position="17"/>
    </location>
</feature>
<feature type="strand" evidence="10">
    <location>
        <begin position="25"/>
        <end position="30"/>
    </location>
</feature>
<feature type="strand" evidence="10">
    <location>
        <begin position="33"/>
        <end position="36"/>
    </location>
</feature>
<feature type="helix" evidence="10">
    <location>
        <begin position="40"/>
        <end position="42"/>
    </location>
</feature>
<feature type="helix" evidence="10">
    <location>
        <begin position="49"/>
        <end position="52"/>
    </location>
</feature>
<feature type="turn" evidence="10">
    <location>
        <begin position="53"/>
        <end position="56"/>
    </location>
</feature>
<feature type="helix" evidence="10">
    <location>
        <begin position="60"/>
        <end position="66"/>
    </location>
</feature>
<feature type="helix" evidence="10">
    <location>
        <begin position="70"/>
        <end position="77"/>
    </location>
</feature>
<feature type="strand" evidence="10">
    <location>
        <begin position="80"/>
        <end position="84"/>
    </location>
</feature>
<feature type="helix" evidence="10">
    <location>
        <begin position="86"/>
        <end position="88"/>
    </location>
</feature>
<feature type="turn" evidence="10">
    <location>
        <begin position="89"/>
        <end position="91"/>
    </location>
</feature>
<dbReference type="EMBL" id="AF016388">
    <property type="protein sequence ID" value="AAC48779.1"/>
    <property type="molecule type" value="mRNA"/>
</dbReference>
<dbReference type="EMBL" id="AF016389">
    <property type="protein sequence ID" value="AAC48780.1"/>
    <property type="molecule type" value="mRNA"/>
</dbReference>
<dbReference type="PIR" id="JC5782">
    <property type="entry name" value="CBPG5"/>
</dbReference>
<dbReference type="PIR" id="JC5783">
    <property type="entry name" value="JC5783"/>
</dbReference>
<dbReference type="RefSeq" id="NP_001001770.1">
    <molecule id="P00172-1"/>
    <property type="nucleotide sequence ID" value="NM_001001770.1"/>
</dbReference>
<dbReference type="PDB" id="3X32">
    <property type="method" value="X-ray"/>
    <property type="resolution" value="0.83 A"/>
    <property type="chains" value="A=1-94"/>
</dbReference>
<dbReference type="PDB" id="3X33">
    <property type="method" value="X-ray"/>
    <property type="resolution" value="0.93 A"/>
    <property type="chains" value="A=1-94"/>
</dbReference>
<dbReference type="PDB" id="3X34">
    <property type="method" value="X-ray"/>
    <property type="resolution" value="0.76 A"/>
    <property type="chains" value="A=1-94"/>
</dbReference>
<dbReference type="PDB" id="3X35">
    <property type="method" value="X-ray"/>
    <property type="resolution" value="0.95 A"/>
    <property type="chains" value="A=1-94"/>
</dbReference>
<dbReference type="PDBsum" id="3X32"/>
<dbReference type="PDBsum" id="3X33"/>
<dbReference type="PDBsum" id="3X34"/>
<dbReference type="PDBsum" id="3X35"/>
<dbReference type="BMRB" id="P00172"/>
<dbReference type="SMR" id="P00172"/>
<dbReference type="CORUM" id="P00172"/>
<dbReference type="FunCoup" id="P00172">
    <property type="interactions" value="1669"/>
</dbReference>
<dbReference type="STRING" id="9823.ENSSSCP00000066961"/>
<dbReference type="PaxDb" id="9823-ENSSSCP00000005246"/>
<dbReference type="PeptideAtlas" id="P00172"/>
<dbReference type="Ensembl" id="ENSSSCT00000051381.3">
    <molecule id="P00172-2"/>
    <property type="protein sequence ID" value="ENSSSCP00000032988.1"/>
    <property type="gene ID" value="ENSSSCG00000004875.4"/>
</dbReference>
<dbReference type="Ensembl" id="ENSSSCT00015071088.1">
    <molecule id="P00172-2"/>
    <property type="protein sequence ID" value="ENSSSCP00015028491.1"/>
    <property type="gene ID" value="ENSSSCG00015053340.1"/>
</dbReference>
<dbReference type="Ensembl" id="ENSSSCT00015071479.1">
    <molecule id="P00172-2"/>
    <property type="protein sequence ID" value="ENSSSCP00015028646.1"/>
    <property type="gene ID" value="ENSSSCG00015053340.1"/>
</dbReference>
<dbReference type="Ensembl" id="ENSSSCT00015071689.1">
    <molecule id="P00172-1"/>
    <property type="protein sequence ID" value="ENSSSCP00015028726.1"/>
    <property type="gene ID" value="ENSSSCG00015053340.1"/>
</dbReference>
<dbReference type="Ensembl" id="ENSSSCT00025039117.1">
    <molecule id="P00172-2"/>
    <property type="protein sequence ID" value="ENSSSCP00025016554.1"/>
    <property type="gene ID" value="ENSSSCG00025028776.1"/>
</dbReference>
<dbReference type="Ensembl" id="ENSSSCT00025039266.1">
    <molecule id="P00172-2"/>
    <property type="protein sequence ID" value="ENSSSCP00025016617.1"/>
    <property type="gene ID" value="ENSSSCG00025028776.1"/>
</dbReference>
<dbReference type="Ensembl" id="ENSSSCT00025039386.1">
    <molecule id="P00172-1"/>
    <property type="protein sequence ID" value="ENSSSCP00025016673.1"/>
    <property type="gene ID" value="ENSSSCG00025028776.1"/>
</dbReference>
<dbReference type="Ensembl" id="ENSSSCT00030099570.1">
    <molecule id="P00172-2"/>
    <property type="protein sequence ID" value="ENSSSCP00030045855.1"/>
    <property type="gene ID" value="ENSSSCG00030071172.1"/>
</dbReference>
<dbReference type="Ensembl" id="ENSSSCT00030099618.1">
    <molecule id="P00172-2"/>
    <property type="protein sequence ID" value="ENSSSCP00030045889.1"/>
    <property type="gene ID" value="ENSSSCG00030071172.1"/>
</dbReference>
<dbReference type="Ensembl" id="ENSSSCT00030099647.1">
    <molecule id="P00172-1"/>
    <property type="protein sequence ID" value="ENSSSCP00030045907.1"/>
    <property type="gene ID" value="ENSSSCG00030071172.1"/>
</dbReference>
<dbReference type="Ensembl" id="ENSSSCT00035034696.1">
    <molecule id="P00172-2"/>
    <property type="protein sequence ID" value="ENSSSCP00035013749.1"/>
    <property type="gene ID" value="ENSSSCG00035026302.1"/>
</dbReference>
<dbReference type="Ensembl" id="ENSSSCT00035034718.1">
    <molecule id="P00172-2"/>
    <property type="protein sequence ID" value="ENSSSCP00035013756.1"/>
    <property type="gene ID" value="ENSSSCG00035026302.1"/>
</dbReference>
<dbReference type="Ensembl" id="ENSSSCT00035034725.1">
    <molecule id="P00172-1"/>
    <property type="protein sequence ID" value="ENSSSCP00035013759.1"/>
    <property type="gene ID" value="ENSSSCG00035026302.1"/>
</dbReference>
<dbReference type="Ensembl" id="ENSSSCT00040089118.1">
    <property type="protein sequence ID" value="ENSSSCP00040039170.1"/>
    <property type="gene ID" value="ENSSSCG00040065260.1"/>
</dbReference>
<dbReference type="Ensembl" id="ENSSSCT00040089271.1">
    <property type="protein sequence ID" value="ENSSSCP00040039243.1"/>
    <property type="gene ID" value="ENSSSCG00040065260.1"/>
</dbReference>
<dbReference type="Ensembl" id="ENSSSCT00040089418.1">
    <molecule id="P00172-1"/>
    <property type="protein sequence ID" value="ENSSSCP00040039311.1"/>
    <property type="gene ID" value="ENSSSCG00040065260.1"/>
</dbReference>
<dbReference type="Ensembl" id="ENSSSCT00045065718.1">
    <molecule id="P00172-2"/>
    <property type="protein sequence ID" value="ENSSSCP00045046521.1"/>
    <property type="gene ID" value="ENSSSCG00045038001.1"/>
</dbReference>
<dbReference type="Ensembl" id="ENSSSCT00045065748.1">
    <molecule id="P00172-2"/>
    <property type="protein sequence ID" value="ENSSSCP00045046545.1"/>
    <property type="gene ID" value="ENSSSCG00045038001.1"/>
</dbReference>
<dbReference type="Ensembl" id="ENSSSCT00045065776.1">
    <molecule id="P00172-1"/>
    <property type="protein sequence ID" value="ENSSSCP00045046571.1"/>
    <property type="gene ID" value="ENSSSCG00045038001.1"/>
</dbReference>
<dbReference type="Ensembl" id="ENSSSCT00050021872.1">
    <molecule id="P00172-2"/>
    <property type="protein sequence ID" value="ENSSSCP00050009185.1"/>
    <property type="gene ID" value="ENSSSCG00050016076.1"/>
</dbReference>
<dbReference type="Ensembl" id="ENSSSCT00050021904.1">
    <molecule id="P00172-2"/>
    <property type="protein sequence ID" value="ENSSSCP00050009201.1"/>
    <property type="gene ID" value="ENSSSCG00050016076.1"/>
</dbReference>
<dbReference type="Ensembl" id="ENSSSCT00050021932.1">
    <molecule id="P00172-1"/>
    <property type="protein sequence ID" value="ENSSSCP00050009217.1"/>
    <property type="gene ID" value="ENSSSCG00050016076.1"/>
</dbReference>
<dbReference type="Ensembl" id="ENSSSCT00055032691.1">
    <molecule id="P00172-2"/>
    <property type="protein sequence ID" value="ENSSSCP00055026041.1"/>
    <property type="gene ID" value="ENSSSCG00055016520.1"/>
</dbReference>
<dbReference type="Ensembl" id="ENSSSCT00055032834.1">
    <molecule id="P00172-2"/>
    <property type="protein sequence ID" value="ENSSSCP00055026154.1"/>
    <property type="gene ID" value="ENSSSCG00055016520.1"/>
</dbReference>
<dbReference type="Ensembl" id="ENSSSCT00055032886.1">
    <molecule id="P00172-1"/>
    <property type="protein sequence ID" value="ENSSSCP00055026197.1"/>
    <property type="gene ID" value="ENSSSCG00055016520.1"/>
</dbReference>
<dbReference type="Ensembl" id="ENSSSCT00060084000.1">
    <molecule id="P00172-2"/>
    <property type="protein sequence ID" value="ENSSSCP00060036408.1"/>
    <property type="gene ID" value="ENSSSCG00060061551.1"/>
</dbReference>
<dbReference type="Ensembl" id="ENSSSCT00060084064.1">
    <molecule id="P00172-1"/>
    <property type="protein sequence ID" value="ENSSSCP00060036428.1"/>
    <property type="gene ID" value="ENSSSCG00060061551.1"/>
</dbReference>
<dbReference type="Ensembl" id="ENSSSCT00060084160.1">
    <molecule id="P00172-2"/>
    <property type="protein sequence ID" value="ENSSSCP00060036459.1"/>
    <property type="gene ID" value="ENSSSCG00060061551.1"/>
</dbReference>
<dbReference type="Ensembl" id="ENSSSCT00065054245.1">
    <molecule id="P00172-2"/>
    <property type="protein sequence ID" value="ENSSSCP00065023564.1"/>
    <property type="gene ID" value="ENSSSCG00065039699.1"/>
</dbReference>
<dbReference type="Ensembl" id="ENSSSCT00065054262.1">
    <molecule id="P00172-2"/>
    <property type="protein sequence ID" value="ENSSSCP00065023571.1"/>
    <property type="gene ID" value="ENSSSCG00065039699.1"/>
</dbReference>
<dbReference type="Ensembl" id="ENSSSCT00065054273.1">
    <molecule id="P00172-1"/>
    <property type="protein sequence ID" value="ENSSSCP00065023579.1"/>
    <property type="gene ID" value="ENSSSCG00065039699.1"/>
</dbReference>
<dbReference type="Ensembl" id="ENSSSCT00070026151.1">
    <molecule id="P00172-1"/>
    <property type="protein sequence ID" value="ENSSSCP00070021708.1"/>
    <property type="gene ID" value="ENSSSCG00070013386.1"/>
</dbReference>
<dbReference type="Ensembl" id="ENSSSCT00070026160.1">
    <molecule id="P00172-1"/>
    <property type="protein sequence ID" value="ENSSSCP00070021714.1"/>
    <property type="gene ID" value="ENSSSCG00070013386.1"/>
</dbReference>
<dbReference type="Ensembl" id="ENSSSCT00070026170.1">
    <molecule id="P00172-2"/>
    <property type="protein sequence ID" value="ENSSSCP00070021722.1"/>
    <property type="gene ID" value="ENSSSCG00070013386.1"/>
</dbReference>
<dbReference type="Ensembl" id="ENSSSCT00070026186.1">
    <molecule id="P00172-2"/>
    <property type="protein sequence ID" value="ENSSSCP00070021735.1"/>
    <property type="gene ID" value="ENSSSCG00070013386.1"/>
</dbReference>
<dbReference type="Ensembl" id="ENSSSCT00115012241">
    <molecule id="P00172-1"/>
    <property type="protein sequence ID" value="ENSSSCP00115011563"/>
    <property type="gene ID" value="ENSSSCG00115006996"/>
</dbReference>
<dbReference type="GeneID" id="414799"/>
<dbReference type="KEGG" id="ssc:414799"/>
<dbReference type="CTD" id="1528"/>
<dbReference type="eggNOG" id="KOG0537">
    <property type="taxonomic scope" value="Eukaryota"/>
</dbReference>
<dbReference type="GeneTree" id="ENSGT00940000156770"/>
<dbReference type="HOGENOM" id="CLU_102602_3_3_1"/>
<dbReference type="InParanoid" id="P00172"/>
<dbReference type="OMA" id="AFDDFGH"/>
<dbReference type="OrthoDB" id="260519at2759"/>
<dbReference type="TreeFam" id="TF314537"/>
<dbReference type="Reactome" id="R-SSC-196836">
    <property type="pathway name" value="Vitamin C (ascorbate) metabolism"/>
</dbReference>
<dbReference type="Reactome" id="R-SSC-9609523">
    <property type="pathway name" value="Insertion of tail-anchored proteins into the endoplasmic reticulum membrane"/>
</dbReference>
<dbReference type="EvolutionaryTrace" id="P00172"/>
<dbReference type="Proteomes" id="UP000008227">
    <property type="component" value="Chromosome 1"/>
</dbReference>
<dbReference type="Proteomes" id="UP000314985">
    <property type="component" value="Chromosome 1"/>
</dbReference>
<dbReference type="Proteomes" id="UP000694570">
    <property type="component" value="Unplaced"/>
</dbReference>
<dbReference type="Proteomes" id="UP000694571">
    <property type="component" value="Unplaced"/>
</dbReference>
<dbReference type="Proteomes" id="UP000694720">
    <property type="component" value="Unplaced"/>
</dbReference>
<dbReference type="Proteomes" id="UP000694722">
    <property type="component" value="Unplaced"/>
</dbReference>
<dbReference type="Proteomes" id="UP000694723">
    <property type="component" value="Unplaced"/>
</dbReference>
<dbReference type="Proteomes" id="UP000694724">
    <property type="component" value="Unplaced"/>
</dbReference>
<dbReference type="Proteomes" id="UP000694725">
    <property type="component" value="Unplaced"/>
</dbReference>
<dbReference type="Proteomes" id="UP000694726">
    <property type="component" value="Unplaced"/>
</dbReference>
<dbReference type="Proteomes" id="UP000694727">
    <property type="component" value="Unplaced"/>
</dbReference>
<dbReference type="Proteomes" id="UP000694728">
    <property type="component" value="Unplaced"/>
</dbReference>
<dbReference type="Bgee" id="ENSSSCG00000004875">
    <property type="expression patterns" value="Expressed in adult mammalian kidney and 47 other cell types or tissues"/>
</dbReference>
<dbReference type="ExpressionAtlas" id="P00172">
    <property type="expression patterns" value="baseline and differential"/>
</dbReference>
<dbReference type="GO" id="GO:0005789">
    <property type="term" value="C:endoplasmic reticulum membrane"/>
    <property type="evidence" value="ECO:0000318"/>
    <property type="project" value="GO_Central"/>
</dbReference>
<dbReference type="GO" id="GO:0043231">
    <property type="term" value="C:intracellular membrane-bounded organelle"/>
    <property type="evidence" value="ECO:0000318"/>
    <property type="project" value="GO_Central"/>
</dbReference>
<dbReference type="GO" id="GO:0020037">
    <property type="term" value="F:heme binding"/>
    <property type="evidence" value="ECO:0000318"/>
    <property type="project" value="GO_Central"/>
</dbReference>
<dbReference type="GO" id="GO:0046872">
    <property type="term" value="F:metal ion binding"/>
    <property type="evidence" value="ECO:0007669"/>
    <property type="project" value="UniProtKB-KW"/>
</dbReference>
<dbReference type="FunFam" id="3.10.120.10:FF:000002">
    <property type="entry name" value="Cytochrome b5 type B"/>
    <property type="match status" value="1"/>
</dbReference>
<dbReference type="Gene3D" id="3.10.120.10">
    <property type="entry name" value="Cytochrome b5-like heme/steroid binding domain"/>
    <property type="match status" value="1"/>
</dbReference>
<dbReference type="InterPro" id="IPR001199">
    <property type="entry name" value="Cyt_B5-like_heme/steroid-bd"/>
</dbReference>
<dbReference type="InterPro" id="IPR036400">
    <property type="entry name" value="Cyt_B5-like_heme/steroid_sf"/>
</dbReference>
<dbReference type="InterPro" id="IPR018506">
    <property type="entry name" value="Cyt_B5_heme-BS"/>
</dbReference>
<dbReference type="InterPro" id="IPR050668">
    <property type="entry name" value="Cytochrome_b5"/>
</dbReference>
<dbReference type="PANTHER" id="PTHR19359">
    <property type="entry name" value="CYTOCHROME B5"/>
    <property type="match status" value="1"/>
</dbReference>
<dbReference type="PANTHER" id="PTHR19359:SF154">
    <property type="entry name" value="CYTOCHROME B5"/>
    <property type="match status" value="1"/>
</dbReference>
<dbReference type="Pfam" id="PF00173">
    <property type="entry name" value="Cyt-b5"/>
    <property type="match status" value="1"/>
</dbReference>
<dbReference type="PRINTS" id="PR00363">
    <property type="entry name" value="CYTOCHROMEB5"/>
</dbReference>
<dbReference type="SMART" id="SM01117">
    <property type="entry name" value="Cyt-b5"/>
    <property type="match status" value="1"/>
</dbReference>
<dbReference type="SUPFAM" id="SSF55856">
    <property type="entry name" value="Cytochrome b5-like heme/steroid binding domain"/>
    <property type="match status" value="1"/>
</dbReference>
<dbReference type="PROSITE" id="PS00191">
    <property type="entry name" value="CYTOCHROME_B5_1"/>
    <property type="match status" value="1"/>
</dbReference>
<dbReference type="PROSITE" id="PS50255">
    <property type="entry name" value="CYTOCHROME_B5_2"/>
    <property type="match status" value="1"/>
</dbReference>
<name>CYB5_PIG</name>